<protein>
    <recommendedName>
        <fullName evidence="1">Dephospho-CoA kinase</fullName>
        <ecNumber evidence="1">2.7.1.24</ecNumber>
    </recommendedName>
    <alternativeName>
        <fullName evidence="1">Dephosphocoenzyme A kinase</fullName>
    </alternativeName>
</protein>
<proteinExistence type="inferred from homology"/>
<sequence length="197" mass="21358">MTFRLGLTGSIGMGKSTTAQMFVDEGCALWDADAAVHRLYSSGGAAVAPMRAAFPDAVVDDAVSRPVLKHIIAEDPQALKRIEAIVHPLVAEDRARFRDSATADILVFDIPLLFETGGEAAMDAVACVSIPPEEQKARVMARGTMTEAQFEQIRAKQMPNEEKCARSDFVIVTDTLDHARAQVQDIVRQIRAGNIHA</sequence>
<evidence type="ECO:0000255" key="1">
    <source>
        <dbReference type="HAMAP-Rule" id="MF_00376"/>
    </source>
</evidence>
<comment type="function">
    <text evidence="1">Catalyzes the phosphorylation of the 3'-hydroxyl group of dephosphocoenzyme A to form coenzyme A.</text>
</comment>
<comment type="catalytic activity">
    <reaction evidence="1">
        <text>3'-dephospho-CoA + ATP = ADP + CoA + H(+)</text>
        <dbReference type="Rhea" id="RHEA:18245"/>
        <dbReference type="ChEBI" id="CHEBI:15378"/>
        <dbReference type="ChEBI" id="CHEBI:30616"/>
        <dbReference type="ChEBI" id="CHEBI:57287"/>
        <dbReference type="ChEBI" id="CHEBI:57328"/>
        <dbReference type="ChEBI" id="CHEBI:456216"/>
        <dbReference type="EC" id="2.7.1.24"/>
    </reaction>
</comment>
<comment type="pathway">
    <text evidence="1">Cofactor biosynthesis; coenzyme A biosynthesis; CoA from (R)-pantothenate: step 5/5.</text>
</comment>
<comment type="subcellular location">
    <subcellularLocation>
        <location evidence="1">Cytoplasm</location>
    </subcellularLocation>
</comment>
<comment type="similarity">
    <text evidence="1">Belongs to the CoaE family.</text>
</comment>
<feature type="chain" id="PRO_0000243342" description="Dephospho-CoA kinase">
    <location>
        <begin position="1"/>
        <end position="197"/>
    </location>
</feature>
<feature type="domain" description="DPCK" evidence="1">
    <location>
        <begin position="4"/>
        <end position="197"/>
    </location>
</feature>
<feature type="binding site" evidence="1">
    <location>
        <begin position="12"/>
        <end position="17"/>
    </location>
    <ligand>
        <name>ATP</name>
        <dbReference type="ChEBI" id="CHEBI:30616"/>
    </ligand>
</feature>
<reference key="1">
    <citation type="journal article" date="2004" name="Nature">
        <title>Genome sequence of Silicibacter pomeroyi reveals adaptations to the marine environment.</title>
        <authorList>
            <person name="Moran M.A."/>
            <person name="Buchan A."/>
            <person name="Gonzalez J.M."/>
            <person name="Heidelberg J.F."/>
            <person name="Whitman W.B."/>
            <person name="Kiene R.P."/>
            <person name="Henriksen J.R."/>
            <person name="King G.M."/>
            <person name="Belas R."/>
            <person name="Fuqua C."/>
            <person name="Brinkac L.M."/>
            <person name="Lewis M."/>
            <person name="Johri S."/>
            <person name="Weaver B."/>
            <person name="Pai G."/>
            <person name="Eisen J.A."/>
            <person name="Rahe E."/>
            <person name="Sheldon W.M."/>
            <person name="Ye W."/>
            <person name="Miller T.R."/>
            <person name="Carlton J."/>
            <person name="Rasko D.A."/>
            <person name="Paulsen I.T."/>
            <person name="Ren Q."/>
            <person name="Daugherty S.C."/>
            <person name="DeBoy R.T."/>
            <person name="Dodson R.J."/>
            <person name="Durkin A.S."/>
            <person name="Madupu R."/>
            <person name="Nelson W.C."/>
            <person name="Sullivan S.A."/>
            <person name="Rosovitz M.J."/>
            <person name="Haft D.H."/>
            <person name="Selengut J."/>
            <person name="Ward N."/>
        </authorList>
    </citation>
    <scope>NUCLEOTIDE SEQUENCE [LARGE SCALE GENOMIC DNA]</scope>
    <source>
        <strain>ATCC 700808 / DSM 15171 / DSS-3</strain>
    </source>
</reference>
<reference key="2">
    <citation type="journal article" date="2014" name="Stand. Genomic Sci.">
        <title>An updated genome annotation for the model marine bacterium Ruegeria pomeroyi DSS-3.</title>
        <authorList>
            <person name="Rivers A.R."/>
            <person name="Smith C.B."/>
            <person name="Moran M.A."/>
        </authorList>
    </citation>
    <scope>GENOME REANNOTATION</scope>
    <source>
        <strain>ATCC 700808 / DSM 15171 / DSS-3</strain>
    </source>
</reference>
<accession>Q5LLN2</accession>
<dbReference type="EC" id="2.7.1.24" evidence="1"/>
<dbReference type="EMBL" id="CP000031">
    <property type="protein sequence ID" value="AAV97105.1"/>
    <property type="molecule type" value="Genomic_DNA"/>
</dbReference>
<dbReference type="RefSeq" id="WP_011049561.1">
    <property type="nucleotide sequence ID" value="NC_003911.12"/>
</dbReference>
<dbReference type="SMR" id="Q5LLN2"/>
<dbReference type="STRING" id="246200.SPO3890"/>
<dbReference type="PaxDb" id="246200-SPO3890"/>
<dbReference type="KEGG" id="sil:SPO3890"/>
<dbReference type="eggNOG" id="COG0237">
    <property type="taxonomic scope" value="Bacteria"/>
</dbReference>
<dbReference type="HOGENOM" id="CLU_057180_3_0_5"/>
<dbReference type="OrthoDB" id="9812943at2"/>
<dbReference type="UniPathway" id="UPA00241">
    <property type="reaction ID" value="UER00356"/>
</dbReference>
<dbReference type="Proteomes" id="UP000001023">
    <property type="component" value="Chromosome"/>
</dbReference>
<dbReference type="GO" id="GO:0005737">
    <property type="term" value="C:cytoplasm"/>
    <property type="evidence" value="ECO:0007669"/>
    <property type="project" value="UniProtKB-SubCell"/>
</dbReference>
<dbReference type="GO" id="GO:0005524">
    <property type="term" value="F:ATP binding"/>
    <property type="evidence" value="ECO:0007669"/>
    <property type="project" value="UniProtKB-UniRule"/>
</dbReference>
<dbReference type="GO" id="GO:0004140">
    <property type="term" value="F:dephospho-CoA kinase activity"/>
    <property type="evidence" value="ECO:0007669"/>
    <property type="project" value="UniProtKB-UniRule"/>
</dbReference>
<dbReference type="GO" id="GO:0015937">
    <property type="term" value="P:coenzyme A biosynthetic process"/>
    <property type="evidence" value="ECO:0007669"/>
    <property type="project" value="UniProtKB-UniRule"/>
</dbReference>
<dbReference type="CDD" id="cd02022">
    <property type="entry name" value="DPCK"/>
    <property type="match status" value="1"/>
</dbReference>
<dbReference type="Gene3D" id="3.40.50.300">
    <property type="entry name" value="P-loop containing nucleotide triphosphate hydrolases"/>
    <property type="match status" value="1"/>
</dbReference>
<dbReference type="HAMAP" id="MF_00376">
    <property type="entry name" value="Dephospho_CoA_kinase"/>
    <property type="match status" value="1"/>
</dbReference>
<dbReference type="InterPro" id="IPR001977">
    <property type="entry name" value="Depp_CoAkinase"/>
</dbReference>
<dbReference type="InterPro" id="IPR027417">
    <property type="entry name" value="P-loop_NTPase"/>
</dbReference>
<dbReference type="NCBIfam" id="TIGR00152">
    <property type="entry name" value="dephospho-CoA kinase"/>
    <property type="match status" value="1"/>
</dbReference>
<dbReference type="PANTHER" id="PTHR10695:SF46">
    <property type="entry name" value="BIFUNCTIONAL COENZYME A SYNTHASE-RELATED"/>
    <property type="match status" value="1"/>
</dbReference>
<dbReference type="PANTHER" id="PTHR10695">
    <property type="entry name" value="DEPHOSPHO-COA KINASE-RELATED"/>
    <property type="match status" value="1"/>
</dbReference>
<dbReference type="Pfam" id="PF01121">
    <property type="entry name" value="CoaE"/>
    <property type="match status" value="1"/>
</dbReference>
<dbReference type="SUPFAM" id="SSF52540">
    <property type="entry name" value="P-loop containing nucleoside triphosphate hydrolases"/>
    <property type="match status" value="1"/>
</dbReference>
<dbReference type="PROSITE" id="PS51219">
    <property type="entry name" value="DPCK"/>
    <property type="match status" value="1"/>
</dbReference>
<name>COAE_RUEPO</name>
<gene>
    <name evidence="1" type="primary">coaE</name>
    <name type="ordered locus">SPO3890</name>
</gene>
<organism>
    <name type="scientific">Ruegeria pomeroyi (strain ATCC 700808 / DSM 15171 / DSS-3)</name>
    <name type="common">Silicibacter pomeroyi</name>
    <dbReference type="NCBI Taxonomy" id="246200"/>
    <lineage>
        <taxon>Bacteria</taxon>
        <taxon>Pseudomonadati</taxon>
        <taxon>Pseudomonadota</taxon>
        <taxon>Alphaproteobacteria</taxon>
        <taxon>Rhodobacterales</taxon>
        <taxon>Roseobacteraceae</taxon>
        <taxon>Ruegeria</taxon>
    </lineage>
</organism>
<keyword id="KW-0067">ATP-binding</keyword>
<keyword id="KW-0173">Coenzyme A biosynthesis</keyword>
<keyword id="KW-0963">Cytoplasm</keyword>
<keyword id="KW-0418">Kinase</keyword>
<keyword id="KW-0547">Nucleotide-binding</keyword>
<keyword id="KW-1185">Reference proteome</keyword>
<keyword id="KW-0808">Transferase</keyword>